<sequence>MERYENLFAQLNDRREGAFVPFVTLGDPGIEQSLKIIDTLIDAGADALELGVPFSDPLADGPTIQNANLRAFAAGVTPAQCFEMLALIREKHPTIPIGLLMYANLVFNNGIDAFYARCEQVGVDSVLVADVPVEESAPFRQAALRHNIAPIFICPPNADDDLLRQVASYGRGYTYLLSRSGVTGAENRGALPLHHLIEKLKEYHAAPALQGFGISSPEQVSAAVRAGAAGAISGSAIVKIIEKNLASPEQMLAELRSFVSAMKAASRA</sequence>
<reference key="1">
    <citation type="journal article" date="2011" name="J. Bacteriol.">
        <title>Comparative genomics of 28 Salmonella enterica isolates: evidence for CRISPR-mediated adaptive sublineage evolution.</title>
        <authorList>
            <person name="Fricke W.F."/>
            <person name="Mammel M.K."/>
            <person name="McDermott P.F."/>
            <person name="Tartera C."/>
            <person name="White D.G."/>
            <person name="Leclerc J.E."/>
            <person name="Ravel J."/>
            <person name="Cebula T.A."/>
        </authorList>
    </citation>
    <scope>NUCLEOTIDE SEQUENCE [LARGE SCALE GENOMIC DNA]</scope>
    <source>
        <strain>SL254</strain>
    </source>
</reference>
<keyword id="KW-0028">Amino-acid biosynthesis</keyword>
<keyword id="KW-0057">Aromatic amino acid biosynthesis</keyword>
<keyword id="KW-0456">Lyase</keyword>
<keyword id="KW-0822">Tryptophan biosynthesis</keyword>
<gene>
    <name evidence="1" type="primary">trpA</name>
    <name type="ordered locus">SNSL254_A1854</name>
</gene>
<feature type="chain" id="PRO_1000095751" description="Tryptophan synthase alpha chain">
    <location>
        <begin position="1"/>
        <end position="268"/>
    </location>
</feature>
<feature type="active site" description="Proton acceptor" evidence="1">
    <location>
        <position position="49"/>
    </location>
</feature>
<feature type="active site" description="Proton acceptor" evidence="1">
    <location>
        <position position="60"/>
    </location>
</feature>
<evidence type="ECO:0000255" key="1">
    <source>
        <dbReference type="HAMAP-Rule" id="MF_00131"/>
    </source>
</evidence>
<protein>
    <recommendedName>
        <fullName evidence="1">Tryptophan synthase alpha chain</fullName>
        <ecNumber evidence="1">4.2.1.20</ecNumber>
    </recommendedName>
</protein>
<accession>B4T6X2</accession>
<organism>
    <name type="scientific">Salmonella newport (strain SL254)</name>
    <dbReference type="NCBI Taxonomy" id="423368"/>
    <lineage>
        <taxon>Bacteria</taxon>
        <taxon>Pseudomonadati</taxon>
        <taxon>Pseudomonadota</taxon>
        <taxon>Gammaproteobacteria</taxon>
        <taxon>Enterobacterales</taxon>
        <taxon>Enterobacteriaceae</taxon>
        <taxon>Salmonella</taxon>
    </lineage>
</organism>
<dbReference type="EC" id="4.2.1.20" evidence="1"/>
<dbReference type="EMBL" id="CP001113">
    <property type="protein sequence ID" value="ACF64389.1"/>
    <property type="molecule type" value="Genomic_DNA"/>
</dbReference>
<dbReference type="RefSeq" id="WP_000443029.1">
    <property type="nucleotide sequence ID" value="NZ_CCMR01000003.1"/>
</dbReference>
<dbReference type="SMR" id="B4T6X2"/>
<dbReference type="KEGG" id="see:SNSL254_A1854"/>
<dbReference type="HOGENOM" id="CLU_016734_0_4_6"/>
<dbReference type="UniPathway" id="UPA00035">
    <property type="reaction ID" value="UER00044"/>
</dbReference>
<dbReference type="Proteomes" id="UP000008824">
    <property type="component" value="Chromosome"/>
</dbReference>
<dbReference type="GO" id="GO:0005829">
    <property type="term" value="C:cytosol"/>
    <property type="evidence" value="ECO:0007669"/>
    <property type="project" value="TreeGrafter"/>
</dbReference>
<dbReference type="GO" id="GO:0004834">
    <property type="term" value="F:tryptophan synthase activity"/>
    <property type="evidence" value="ECO:0007669"/>
    <property type="project" value="UniProtKB-UniRule"/>
</dbReference>
<dbReference type="CDD" id="cd04724">
    <property type="entry name" value="Tryptophan_synthase_alpha"/>
    <property type="match status" value="1"/>
</dbReference>
<dbReference type="FunFam" id="3.20.20.70:FF:000037">
    <property type="entry name" value="Tryptophan synthase alpha chain"/>
    <property type="match status" value="1"/>
</dbReference>
<dbReference type="Gene3D" id="3.20.20.70">
    <property type="entry name" value="Aldolase class I"/>
    <property type="match status" value="1"/>
</dbReference>
<dbReference type="HAMAP" id="MF_00131">
    <property type="entry name" value="Trp_synth_alpha"/>
    <property type="match status" value="1"/>
</dbReference>
<dbReference type="InterPro" id="IPR013785">
    <property type="entry name" value="Aldolase_TIM"/>
</dbReference>
<dbReference type="InterPro" id="IPR011060">
    <property type="entry name" value="RibuloseP-bd_barrel"/>
</dbReference>
<dbReference type="InterPro" id="IPR018204">
    <property type="entry name" value="Trp_synthase_alpha_AS"/>
</dbReference>
<dbReference type="InterPro" id="IPR002028">
    <property type="entry name" value="Trp_synthase_suA"/>
</dbReference>
<dbReference type="NCBIfam" id="TIGR00262">
    <property type="entry name" value="trpA"/>
    <property type="match status" value="1"/>
</dbReference>
<dbReference type="PANTHER" id="PTHR43406:SF1">
    <property type="entry name" value="TRYPTOPHAN SYNTHASE ALPHA CHAIN, CHLOROPLASTIC"/>
    <property type="match status" value="1"/>
</dbReference>
<dbReference type="PANTHER" id="PTHR43406">
    <property type="entry name" value="TRYPTOPHAN SYNTHASE, ALPHA CHAIN"/>
    <property type="match status" value="1"/>
</dbReference>
<dbReference type="Pfam" id="PF00290">
    <property type="entry name" value="Trp_syntA"/>
    <property type="match status" value="1"/>
</dbReference>
<dbReference type="SUPFAM" id="SSF51366">
    <property type="entry name" value="Ribulose-phoshate binding barrel"/>
    <property type="match status" value="1"/>
</dbReference>
<dbReference type="PROSITE" id="PS00167">
    <property type="entry name" value="TRP_SYNTHASE_ALPHA"/>
    <property type="match status" value="1"/>
</dbReference>
<name>TRPA_SALNS</name>
<proteinExistence type="inferred from homology"/>
<comment type="function">
    <text evidence="1">The alpha subunit is responsible for the aldol cleavage of indoleglycerol phosphate to indole and glyceraldehyde 3-phosphate.</text>
</comment>
<comment type="catalytic activity">
    <reaction evidence="1">
        <text>(1S,2R)-1-C-(indol-3-yl)glycerol 3-phosphate + L-serine = D-glyceraldehyde 3-phosphate + L-tryptophan + H2O</text>
        <dbReference type="Rhea" id="RHEA:10532"/>
        <dbReference type="ChEBI" id="CHEBI:15377"/>
        <dbReference type="ChEBI" id="CHEBI:33384"/>
        <dbReference type="ChEBI" id="CHEBI:57912"/>
        <dbReference type="ChEBI" id="CHEBI:58866"/>
        <dbReference type="ChEBI" id="CHEBI:59776"/>
        <dbReference type="EC" id="4.2.1.20"/>
    </reaction>
</comment>
<comment type="pathway">
    <text evidence="1">Amino-acid biosynthesis; L-tryptophan biosynthesis; L-tryptophan from chorismate: step 5/5.</text>
</comment>
<comment type="subunit">
    <text evidence="1">Tetramer of two alpha and two beta chains.</text>
</comment>
<comment type="similarity">
    <text evidence="1">Belongs to the TrpA family.</text>
</comment>